<feature type="chain" id="PRO_0000050134" description="Vigilin">
    <location>
        <begin position="1"/>
        <end position="1270"/>
    </location>
</feature>
<feature type="domain" description="KH 1" evidence="1">
    <location>
        <begin position="150"/>
        <end position="188"/>
    </location>
</feature>
<feature type="domain" description="KH 2" evidence="1">
    <location>
        <begin position="219"/>
        <end position="260"/>
    </location>
</feature>
<feature type="domain" description="KH 3" evidence="1">
    <location>
        <begin position="291"/>
        <end position="333"/>
    </location>
</feature>
<feature type="domain" description="KH 4" evidence="1">
    <location>
        <begin position="360"/>
        <end position="402"/>
    </location>
</feature>
<feature type="domain" description="KH 5" evidence="1">
    <location>
        <begin position="431"/>
        <end position="473"/>
    </location>
</feature>
<feature type="domain" description="KH 6" evidence="1">
    <location>
        <begin position="504"/>
        <end position="545"/>
    </location>
</feature>
<feature type="domain" description="KH 7" evidence="1">
    <location>
        <begin position="577"/>
        <end position="619"/>
    </location>
</feature>
<feature type="domain" description="KH 8" evidence="1">
    <location>
        <begin position="651"/>
        <end position="693"/>
    </location>
</feature>
<feature type="domain" description="KH 9" evidence="1">
    <location>
        <begin position="724"/>
        <end position="766"/>
    </location>
</feature>
<feature type="domain" description="KH 10" evidence="1">
    <location>
        <begin position="798"/>
        <end position="840"/>
    </location>
</feature>
<feature type="domain" description="KH 11" evidence="1">
    <location>
        <begin position="872"/>
        <end position="913"/>
    </location>
</feature>
<feature type="domain" description="KH 12" evidence="1">
    <location>
        <begin position="970"/>
        <end position="1012"/>
    </location>
</feature>
<feature type="domain" description="KH 13" evidence="1">
    <location>
        <begin position="1051"/>
        <end position="1093"/>
    </location>
</feature>
<feature type="domain" description="KH 14" evidence="1">
    <location>
        <begin position="1126"/>
        <end position="1168"/>
    </location>
</feature>
<feature type="region of interest" description="Disordered" evidence="2">
    <location>
        <begin position="1"/>
        <end position="23"/>
    </location>
</feature>
<feature type="region of interest" description="Disordered" evidence="2">
    <location>
        <begin position="28"/>
        <end position="47"/>
    </location>
</feature>
<feature type="region of interest" description="Disordered" evidence="2">
    <location>
        <begin position="911"/>
        <end position="947"/>
    </location>
</feature>
<feature type="region of interest" description="Disordered" evidence="2">
    <location>
        <begin position="1217"/>
        <end position="1270"/>
    </location>
</feature>
<feature type="compositionally biased region" description="Polar residues" evidence="2">
    <location>
        <begin position="1"/>
        <end position="11"/>
    </location>
</feature>
<feature type="compositionally biased region" description="Basic and acidic residues" evidence="2">
    <location>
        <begin position="933"/>
        <end position="947"/>
    </location>
</feature>
<comment type="subcellular location">
    <subcellularLocation>
        <location>Cytoplasm</location>
    </subcellularLocation>
</comment>
<reference key="1">
    <citation type="journal article" date="1992" name="Eur. J. Biochem.">
        <title>Complete cDNA sequence of chicken vigilin, a novel protein with amplified and evolutionary conserved domains.</title>
        <authorList>
            <person name="Schmidt C."/>
            <person name="Henkel B."/>
            <person name="Poeschl E."/>
            <person name="Zorbas H."/>
            <person name="Purschke W.G."/>
            <person name="Gloe T.R."/>
            <person name="Mueller P.K."/>
        </authorList>
    </citation>
    <scope>NUCLEOTIDE SEQUENCE [MRNA]</scope>
    <source>
        <tissue>Embryonic sternal cartilage</tissue>
    </source>
</reference>
<keyword id="KW-0963">Cytoplasm</keyword>
<keyword id="KW-1185">Reference proteome</keyword>
<keyword id="KW-0677">Repeat</keyword>
<keyword id="KW-0694">RNA-binding</keyword>
<name>VIGLN_CHICK</name>
<proteinExistence type="evidence at transcript level"/>
<protein>
    <recommendedName>
        <fullName>Vigilin</fullName>
    </recommendedName>
</protein>
<gene>
    <name type="primary">HDLBP</name>
    <name type="synonym">VGL</name>
</gene>
<accession>P81021</accession>
<evidence type="ECO:0000255" key="1">
    <source>
        <dbReference type="PROSITE-ProRule" id="PRU00117"/>
    </source>
</evidence>
<evidence type="ECO:0000256" key="2">
    <source>
        <dbReference type="SAM" id="MobiDB-lite"/>
    </source>
</evidence>
<dbReference type="EMBL" id="X65292">
    <property type="protein sequence ID" value="CAA46387.1"/>
    <property type="molecule type" value="mRNA"/>
</dbReference>
<dbReference type="PIR" id="S23464">
    <property type="entry name" value="S23464"/>
</dbReference>
<dbReference type="SMR" id="P81021"/>
<dbReference type="FunCoup" id="P81021">
    <property type="interactions" value="2283"/>
</dbReference>
<dbReference type="STRING" id="9031.ENSGALP00000009341"/>
<dbReference type="GlyGen" id="P81021">
    <property type="glycosylation" value="1 site"/>
</dbReference>
<dbReference type="PaxDb" id="9031-ENSGALP00000009341"/>
<dbReference type="VEuPathDB" id="HostDB:geneid_395984"/>
<dbReference type="eggNOG" id="KOG2208">
    <property type="taxonomic scope" value="Eukaryota"/>
</dbReference>
<dbReference type="InParanoid" id="P81021"/>
<dbReference type="OrthoDB" id="10027144at2759"/>
<dbReference type="PhylomeDB" id="P81021"/>
<dbReference type="Proteomes" id="UP000000539">
    <property type="component" value="Unassembled WGS sequence"/>
</dbReference>
<dbReference type="GO" id="GO:0005737">
    <property type="term" value="C:cytoplasm"/>
    <property type="evidence" value="ECO:0007669"/>
    <property type="project" value="UniProtKB-SubCell"/>
</dbReference>
<dbReference type="GO" id="GO:0003729">
    <property type="term" value="F:mRNA binding"/>
    <property type="evidence" value="ECO:0000318"/>
    <property type="project" value="GO_Central"/>
</dbReference>
<dbReference type="CDD" id="cd22405">
    <property type="entry name" value="KH-I_Vigilin_rpt1"/>
    <property type="match status" value="1"/>
</dbReference>
<dbReference type="CDD" id="cd22413">
    <property type="entry name" value="KH-I_Vigilin_rpt10"/>
    <property type="match status" value="1"/>
</dbReference>
<dbReference type="CDD" id="cd22414">
    <property type="entry name" value="KH-I_Vigilin_rpt11"/>
    <property type="match status" value="1"/>
</dbReference>
<dbReference type="CDD" id="cd22415">
    <property type="entry name" value="KH-I_Vigilin_rpt12"/>
    <property type="match status" value="1"/>
</dbReference>
<dbReference type="CDD" id="cd22416">
    <property type="entry name" value="KH-I_Vigilin_rpt13"/>
    <property type="match status" value="1"/>
</dbReference>
<dbReference type="CDD" id="cd22417">
    <property type="entry name" value="KH-I_Vigilin_rpt14"/>
    <property type="match status" value="1"/>
</dbReference>
<dbReference type="CDD" id="cd22418">
    <property type="entry name" value="KH-I_Vigilin_rpt15"/>
    <property type="match status" value="1"/>
</dbReference>
<dbReference type="CDD" id="cd22406">
    <property type="entry name" value="KH-I_Vigilin_rpt2"/>
    <property type="match status" value="1"/>
</dbReference>
<dbReference type="CDD" id="cd22407">
    <property type="entry name" value="KH-I_Vigilin_rpt3"/>
    <property type="match status" value="1"/>
</dbReference>
<dbReference type="CDD" id="cd22408">
    <property type="entry name" value="KH-I_Vigilin_rpt4"/>
    <property type="match status" value="1"/>
</dbReference>
<dbReference type="CDD" id="cd22409">
    <property type="entry name" value="KH-I_Vigilin_rpt5"/>
    <property type="match status" value="1"/>
</dbReference>
<dbReference type="CDD" id="cd02394">
    <property type="entry name" value="KH-I_Vigilin_rpt6"/>
    <property type="match status" value="1"/>
</dbReference>
<dbReference type="CDD" id="cd22410">
    <property type="entry name" value="KH-I_Vigilin_rpt7"/>
    <property type="match status" value="1"/>
</dbReference>
<dbReference type="CDD" id="cd22411">
    <property type="entry name" value="KH-I_Vigilin_rpt8"/>
    <property type="match status" value="1"/>
</dbReference>
<dbReference type="CDD" id="cd22412">
    <property type="entry name" value="KH-I_Vigilin_rpt9"/>
    <property type="match status" value="1"/>
</dbReference>
<dbReference type="FunFam" id="3.30.1370.10:FF:000057">
    <property type="entry name" value="High density lipoprotein binding protein"/>
    <property type="match status" value="1"/>
</dbReference>
<dbReference type="FunFam" id="3.30.1370.10:FF:000061">
    <property type="entry name" value="High density lipoprotein binding protein"/>
    <property type="match status" value="1"/>
</dbReference>
<dbReference type="FunFam" id="3.30.1370.10:FF:000067">
    <property type="entry name" value="High density lipoprotein binding protein"/>
    <property type="match status" value="1"/>
</dbReference>
<dbReference type="FunFam" id="3.30.1370.10:FF:000042">
    <property type="entry name" value="Vigilin isoform X1"/>
    <property type="match status" value="1"/>
</dbReference>
<dbReference type="FunFam" id="3.30.1370.10:FF:000018">
    <property type="entry name" value="vigilin isoform X1"/>
    <property type="match status" value="2"/>
</dbReference>
<dbReference type="FunFam" id="3.30.1370.10:FF:000033">
    <property type="entry name" value="vigilin isoform X1"/>
    <property type="match status" value="1"/>
</dbReference>
<dbReference type="FunFam" id="3.30.1370.10:FF:000039">
    <property type="entry name" value="vigilin isoform X1"/>
    <property type="match status" value="1"/>
</dbReference>
<dbReference type="FunFam" id="3.30.1370.10:FF:000041">
    <property type="entry name" value="vigilin isoform X1"/>
    <property type="match status" value="1"/>
</dbReference>
<dbReference type="FunFam" id="3.30.1370.10:FF:000050">
    <property type="entry name" value="vigilin isoform X1"/>
    <property type="match status" value="1"/>
</dbReference>
<dbReference type="FunFam" id="3.30.1370.10:FF:000062">
    <property type="entry name" value="vigilin isoform X1"/>
    <property type="match status" value="1"/>
</dbReference>
<dbReference type="Gene3D" id="3.30.1370.10">
    <property type="entry name" value="K Homology domain, type 1"/>
    <property type="match status" value="13"/>
</dbReference>
<dbReference type="InterPro" id="IPR004087">
    <property type="entry name" value="KH_dom"/>
</dbReference>
<dbReference type="InterPro" id="IPR004088">
    <property type="entry name" value="KH_dom_type_1"/>
</dbReference>
<dbReference type="InterPro" id="IPR036612">
    <property type="entry name" value="KH_dom_type_1_sf"/>
</dbReference>
<dbReference type="PANTHER" id="PTHR10627">
    <property type="entry name" value="SCP160"/>
    <property type="match status" value="1"/>
</dbReference>
<dbReference type="PANTHER" id="PTHR10627:SF34">
    <property type="entry name" value="VIGILIN"/>
    <property type="match status" value="1"/>
</dbReference>
<dbReference type="Pfam" id="PF00013">
    <property type="entry name" value="KH_1"/>
    <property type="match status" value="14"/>
</dbReference>
<dbReference type="Pfam" id="PF24668">
    <property type="entry name" value="KH_Vigilin"/>
    <property type="match status" value="1"/>
</dbReference>
<dbReference type="SMART" id="SM00322">
    <property type="entry name" value="KH"/>
    <property type="match status" value="14"/>
</dbReference>
<dbReference type="SUPFAM" id="SSF54791">
    <property type="entry name" value="Eukaryotic type KH-domain (KH-domain type I)"/>
    <property type="match status" value="14"/>
</dbReference>
<dbReference type="PROSITE" id="PS50084">
    <property type="entry name" value="KH_TYPE_1"/>
    <property type="match status" value="14"/>
</dbReference>
<sequence length="1270" mass="142221">MSSVAVLTQESFAEHRSGLTQQQVKVTALNSEEENDPPTYKEAFPPLPEKAPCLEAAQEPSGPWSKIRPIKASVITQVFHVPLEERKYKDMNQFGEGEQAKICLDIMQKTGAHLELSLAKDQGLSIMVSGKLEAVMKARKEIVARLQTQASATVAIPKEHHRFVIGKNGEKLQDLELKTATKIQIPRPDDPSNQIKITGTKEGIEKARHEILLISAEQDKRAVERLDVEKVYHPFIAGPYNKLVSELMQDTGTRINIPPPSVNKTEIVFTGEKEQLAQAVARVKKIYEEKKKKTTTIAVEVKKSQHKYVIGRKGNSLQEILEKTGVSVEIPPTDSSSETVILRGEPEKLGQALTEVYAKANSFTVSSVSAPSWLHRFIIGLFGQNLAKITQQMPKIHIEFTEGEDKITSEGPTEDVNVAQEQIEVMVKDLINRTDYAEINVDHKFHRHLIGKNGANINRIKDLYKVSVRIPPDNEKSNLIRIEGDPQGVQQAKKELLELASRMENERTKDLIIEQKFHRTIIGQKGERIREIREKFPEVIINFPDPAHKSDIVQLRGPKNEVEKCTKYMQKMVADLVENSFSISVPIFKQFHKNIIGKGGANIKKIREESNTKIDLPGREQATQRQLLSQGREQTVKLLRHRILAIQKELANITEVEVSIPSKLHNSLIGAKGRFIRSIMEECGGVHIHFPTEGSGSATVTIRAQPRTWRKPRSSCCTWAEEKQTKSYTVDLRAKPEYHKFLIGKGGGNIRKVRDNTGARIIFPTSEDKDQELITIMGTEEAVKEAQKELEALIKNLDNVVEDSMVVDPKHHRHFVIRRGQVLREIADEYGGVMVRLPTVSGTQSDKVTLKGAKDCVEAAKKRIQEIIEDLEAQVTIECTIPQKFHRSIMGPKGSRIQQITRDYGVQIKFPDREENPAPVAEPALQENGEEGGEGKDGKDADPSSPRKCDIIIISGRREKCEAAKEALQALVPVTIEVEVPFDLHRYIIGQKGSGIRKMMDEFEVNIQVPAPELQSSDIITITGLAANLDRAKAGLLERVKELQAEQEDRALRSFKLTVTVDPKYHPKIIGRKGAVITQIRTEHEVNIQFPDKDDESQAQDQITITGYEKNAEAARDAIMKIVGELEQMVSEDVTLDHRVHARIIGARGKAIRKIMDEFKVDIRFPQSGAPDPNCVTVTGLPENVEEAIDHILNLEEEYLADVVDNEAMQVYMKPSSHEESKVPSKGFVVRDAPCGTVNNEKAPDMSSSEDFPSFGAQVAPKTLPWGPKR</sequence>
<organism>
    <name type="scientific">Gallus gallus</name>
    <name type="common">Chicken</name>
    <dbReference type="NCBI Taxonomy" id="9031"/>
    <lineage>
        <taxon>Eukaryota</taxon>
        <taxon>Metazoa</taxon>
        <taxon>Chordata</taxon>
        <taxon>Craniata</taxon>
        <taxon>Vertebrata</taxon>
        <taxon>Euteleostomi</taxon>
        <taxon>Archelosauria</taxon>
        <taxon>Archosauria</taxon>
        <taxon>Dinosauria</taxon>
        <taxon>Saurischia</taxon>
        <taxon>Theropoda</taxon>
        <taxon>Coelurosauria</taxon>
        <taxon>Aves</taxon>
        <taxon>Neognathae</taxon>
        <taxon>Galloanserae</taxon>
        <taxon>Galliformes</taxon>
        <taxon>Phasianidae</taxon>
        <taxon>Phasianinae</taxon>
        <taxon>Gallus</taxon>
    </lineage>
</organism>